<accession>O67774</accession>
<evidence type="ECO:0000250" key="1"/>
<evidence type="ECO:0000255" key="2"/>
<evidence type="ECO:0000305" key="3"/>
<organism>
    <name type="scientific">Aquifex aeolicus (strain VF5)</name>
    <dbReference type="NCBI Taxonomy" id="224324"/>
    <lineage>
        <taxon>Bacteria</taxon>
        <taxon>Pseudomonadati</taxon>
        <taxon>Aquificota</taxon>
        <taxon>Aquificia</taxon>
        <taxon>Aquificales</taxon>
        <taxon>Aquificaceae</taxon>
        <taxon>Aquifex</taxon>
    </lineage>
</organism>
<comment type="function">
    <text evidence="1">Role in flagellar biosynthesis.</text>
</comment>
<comment type="subcellular location">
    <subcellularLocation>
        <location evidence="3">Cell membrane</location>
        <topology evidence="3">Multi-pass membrane protein</topology>
    </subcellularLocation>
    <subcellularLocation>
        <location evidence="1">Bacterial flagellum basal body</location>
    </subcellularLocation>
</comment>
<comment type="similarity">
    <text evidence="3">Belongs to the FliQ/MopD/SpaQ family.</text>
</comment>
<gene>
    <name type="primary">fliQ</name>
    <name type="ordered locus">aq_1962</name>
</gene>
<proteinExistence type="inferred from homology"/>
<feature type="chain" id="PRO_0000129086" description="Flagellar biosynthetic protein FliQ">
    <location>
        <begin position="1"/>
        <end position="89"/>
    </location>
</feature>
<feature type="transmembrane region" description="Helical" evidence="2">
    <location>
        <begin position="18"/>
        <end position="38"/>
    </location>
</feature>
<feature type="transmembrane region" description="Helical" evidence="2">
    <location>
        <begin position="49"/>
        <end position="69"/>
    </location>
</feature>
<dbReference type="EMBL" id="AE000657">
    <property type="protein sequence ID" value="AAC07731.1"/>
    <property type="molecule type" value="Genomic_DNA"/>
</dbReference>
<dbReference type="PIR" id="B70468">
    <property type="entry name" value="B70468"/>
</dbReference>
<dbReference type="RefSeq" id="NP_214343.1">
    <property type="nucleotide sequence ID" value="NC_000918.1"/>
</dbReference>
<dbReference type="RefSeq" id="WP_010881279.1">
    <property type="nucleotide sequence ID" value="NC_000918.1"/>
</dbReference>
<dbReference type="SMR" id="O67774"/>
<dbReference type="FunCoup" id="O67774">
    <property type="interactions" value="56"/>
</dbReference>
<dbReference type="STRING" id="224324.aq_1962"/>
<dbReference type="EnsemblBacteria" id="AAC07731">
    <property type="protein sequence ID" value="AAC07731"/>
    <property type="gene ID" value="aq_1962"/>
</dbReference>
<dbReference type="KEGG" id="aae:aq_1962"/>
<dbReference type="PATRIC" id="fig|224324.8.peg.1513"/>
<dbReference type="eggNOG" id="COG1987">
    <property type="taxonomic scope" value="Bacteria"/>
</dbReference>
<dbReference type="HOGENOM" id="CLU_164516_2_1_0"/>
<dbReference type="InParanoid" id="O67774"/>
<dbReference type="OrthoDB" id="9806440at2"/>
<dbReference type="Proteomes" id="UP000000798">
    <property type="component" value="Chromosome"/>
</dbReference>
<dbReference type="GO" id="GO:0009425">
    <property type="term" value="C:bacterial-type flagellum basal body"/>
    <property type="evidence" value="ECO:0007669"/>
    <property type="project" value="UniProtKB-SubCell"/>
</dbReference>
<dbReference type="GO" id="GO:0005886">
    <property type="term" value="C:plasma membrane"/>
    <property type="evidence" value="ECO:0007669"/>
    <property type="project" value="UniProtKB-SubCell"/>
</dbReference>
<dbReference type="GO" id="GO:0044780">
    <property type="term" value="P:bacterial-type flagellum assembly"/>
    <property type="evidence" value="ECO:0000318"/>
    <property type="project" value="GO_Central"/>
</dbReference>
<dbReference type="GO" id="GO:0009306">
    <property type="term" value="P:protein secretion"/>
    <property type="evidence" value="ECO:0007669"/>
    <property type="project" value="InterPro"/>
</dbReference>
<dbReference type="InterPro" id="IPR002191">
    <property type="entry name" value="Bac_export_3"/>
</dbReference>
<dbReference type="InterPro" id="IPR006305">
    <property type="entry name" value="FliQ"/>
</dbReference>
<dbReference type="NCBIfam" id="TIGR01402">
    <property type="entry name" value="fliQ"/>
    <property type="match status" value="1"/>
</dbReference>
<dbReference type="PANTHER" id="PTHR34040">
    <property type="entry name" value="FLAGELLAR BIOSYNTHETIC PROTEIN FLIQ"/>
    <property type="match status" value="1"/>
</dbReference>
<dbReference type="PANTHER" id="PTHR34040:SF2">
    <property type="entry name" value="FLAGELLAR BIOSYNTHETIC PROTEIN FLIQ"/>
    <property type="match status" value="1"/>
</dbReference>
<dbReference type="Pfam" id="PF01313">
    <property type="entry name" value="Bac_export_3"/>
    <property type="match status" value="1"/>
</dbReference>
<dbReference type="PIRSF" id="PIRSF004669">
    <property type="entry name" value="FliQ"/>
    <property type="match status" value="1"/>
</dbReference>
<dbReference type="PRINTS" id="PR00952">
    <property type="entry name" value="TYPE3IMQPROT"/>
</dbReference>
<protein>
    <recommendedName>
        <fullName>Flagellar biosynthetic protein FliQ</fullName>
    </recommendedName>
</protein>
<keyword id="KW-0975">Bacterial flagellum</keyword>
<keyword id="KW-1003">Cell membrane</keyword>
<keyword id="KW-0472">Membrane</keyword>
<keyword id="KW-1185">Reference proteome</keyword>
<keyword id="KW-0812">Transmembrane</keyword>
<keyword id="KW-1133">Transmembrane helix</keyword>
<sequence>MEQDLIVSLGQRALEMTLLLALPVLLSTFVVGLVVSIFQAATQIQEMTLSYIPKVITAFLVIFLLGGWMMRKLVDFAVEIFANIPVWIR</sequence>
<reference key="1">
    <citation type="journal article" date="1998" name="Nature">
        <title>The complete genome of the hyperthermophilic bacterium Aquifex aeolicus.</title>
        <authorList>
            <person name="Deckert G."/>
            <person name="Warren P.V."/>
            <person name="Gaasterland T."/>
            <person name="Young W.G."/>
            <person name="Lenox A.L."/>
            <person name="Graham D.E."/>
            <person name="Overbeek R."/>
            <person name="Snead M.A."/>
            <person name="Keller M."/>
            <person name="Aujay M."/>
            <person name="Huber R."/>
            <person name="Feldman R.A."/>
            <person name="Short J.M."/>
            <person name="Olsen G.J."/>
            <person name="Swanson R.V."/>
        </authorList>
    </citation>
    <scope>NUCLEOTIDE SEQUENCE [LARGE SCALE GENOMIC DNA]</scope>
    <source>
        <strain>VF5</strain>
    </source>
</reference>
<name>FLIQ_AQUAE</name>